<feature type="chain" id="PRO_0000257000" description="Chaperonin GroEL">
    <location>
        <begin position="1"/>
        <end position="545"/>
    </location>
</feature>
<feature type="binding site" evidence="1">
    <location>
        <begin position="31"/>
        <end position="34"/>
    </location>
    <ligand>
        <name>ATP</name>
        <dbReference type="ChEBI" id="CHEBI:30616"/>
    </ligand>
</feature>
<feature type="binding site" evidence="1">
    <location>
        <begin position="88"/>
        <end position="92"/>
    </location>
    <ligand>
        <name>ATP</name>
        <dbReference type="ChEBI" id="CHEBI:30616"/>
    </ligand>
</feature>
<feature type="binding site" evidence="1">
    <location>
        <position position="415"/>
    </location>
    <ligand>
        <name>ATP</name>
        <dbReference type="ChEBI" id="CHEBI:30616"/>
    </ligand>
</feature>
<feature type="binding site" evidence="1">
    <location>
        <begin position="478"/>
        <end position="480"/>
    </location>
    <ligand>
        <name>ATP</name>
        <dbReference type="ChEBI" id="CHEBI:30616"/>
    </ligand>
</feature>
<feature type="binding site" evidence="1">
    <location>
        <position position="494"/>
    </location>
    <ligand>
        <name>ATP</name>
        <dbReference type="ChEBI" id="CHEBI:30616"/>
    </ligand>
</feature>
<proteinExistence type="inferred from homology"/>
<organism>
    <name type="scientific">Streptococcus pyogenes serotype M28 (strain MGAS6180)</name>
    <dbReference type="NCBI Taxonomy" id="319701"/>
    <lineage>
        <taxon>Bacteria</taxon>
        <taxon>Bacillati</taxon>
        <taxon>Bacillota</taxon>
        <taxon>Bacilli</taxon>
        <taxon>Lactobacillales</taxon>
        <taxon>Streptococcaceae</taxon>
        <taxon>Streptococcus</taxon>
    </lineage>
</organism>
<comment type="function">
    <text evidence="1">Together with its co-chaperonin GroES, plays an essential role in assisting protein folding. The GroEL-GroES system forms a nano-cage that allows encapsulation of the non-native substrate proteins and provides a physical environment optimized to promote and accelerate protein folding.</text>
</comment>
<comment type="catalytic activity">
    <reaction evidence="1">
        <text>ATP + H2O + a folded polypeptide = ADP + phosphate + an unfolded polypeptide.</text>
        <dbReference type="EC" id="5.6.1.7"/>
    </reaction>
</comment>
<comment type="subunit">
    <text evidence="1">Forms a cylinder of 14 subunits composed of two heptameric rings stacked back-to-back. Interacts with the co-chaperonin GroES.</text>
</comment>
<comment type="subcellular location">
    <subcellularLocation>
        <location evidence="1">Cytoplasm</location>
    </subcellularLocation>
</comment>
<comment type="similarity">
    <text evidence="1">Belongs to the chaperonin (HSP60) family.</text>
</comment>
<reference key="1">
    <citation type="journal article" date="2005" name="J. Infect. Dis.">
        <title>Genome sequence of a serotype M28 strain of group A Streptococcus: potential new insights into puerperal sepsis and bacterial disease specificity.</title>
        <authorList>
            <person name="Green N.M."/>
            <person name="Zhang S."/>
            <person name="Porcella S.F."/>
            <person name="Nagiec M.J."/>
            <person name="Barbian K.D."/>
            <person name="Beres S.B."/>
            <person name="Lefebvre R.B."/>
            <person name="Musser J.M."/>
        </authorList>
    </citation>
    <scope>NUCLEOTIDE SEQUENCE [LARGE SCALE GENOMIC DNA]</scope>
    <source>
        <strain>MGAS6180</strain>
    </source>
</reference>
<name>CH60_STRPM</name>
<keyword id="KW-0067">ATP-binding</keyword>
<keyword id="KW-0143">Chaperone</keyword>
<keyword id="KW-0963">Cytoplasm</keyword>
<keyword id="KW-0413">Isomerase</keyword>
<keyword id="KW-0547">Nucleotide-binding</keyword>
<sequence length="545" mass="57311">MNMAKDIKFSADARAAMVRGVDMLADTVKVTLGPKGRNVVLEKAFGSPLITNDGVTIAKEIELEDHFENMGAKLVSEVASKTNDIAGDGTTTATVLTQAIVHEGLKNVTAGANPIGIRRGIETATATAVEALKAIAQPVSGKEAIAQVAAVSSRSEKVGEYISEAMERVGNDGVITIEESRGMETELEVVEGMQFDRGYLSQYMVTDNEKMVADLENPFILITDKKVSNIQDILPLLEEVLKTNRPLLIIADDVDGEALPTLVLNKIRGTFNVVAVKAPGFGDRRKAMLEDIAILTGGTVITEDLGLELKDATMTALGQAAKITVDKDSTVIVEGSGSSEAIANRIALIKSQLETTTSDFDREKLQERLAKLAGGVAVIKVGAPTETALKEMKLRIEDALNATRAAVEEGIVAGGGTALITVIEKVAALELEGDDATGRNIVLRALEEPVRQIALNAGYEGSVVIDKLKNSPAGTGFNAATGEWVDMIKTGIIDPVKVTRSALQNAASVASLILTTEAVVANKPEPAAPAPAMPAGMDPGMMGGF</sequence>
<dbReference type="EC" id="5.6.1.7" evidence="1"/>
<dbReference type="EMBL" id="CP000056">
    <property type="protein sequence ID" value="AAX72857.1"/>
    <property type="molecule type" value="Genomic_DNA"/>
</dbReference>
<dbReference type="SMR" id="Q48R03"/>
<dbReference type="KEGG" id="spb:M28_Spy1747"/>
<dbReference type="HOGENOM" id="CLU_016503_3_0_9"/>
<dbReference type="GO" id="GO:0005737">
    <property type="term" value="C:cytoplasm"/>
    <property type="evidence" value="ECO:0007669"/>
    <property type="project" value="UniProtKB-SubCell"/>
</dbReference>
<dbReference type="GO" id="GO:0005524">
    <property type="term" value="F:ATP binding"/>
    <property type="evidence" value="ECO:0007669"/>
    <property type="project" value="UniProtKB-UniRule"/>
</dbReference>
<dbReference type="GO" id="GO:0140662">
    <property type="term" value="F:ATP-dependent protein folding chaperone"/>
    <property type="evidence" value="ECO:0007669"/>
    <property type="project" value="InterPro"/>
</dbReference>
<dbReference type="GO" id="GO:0016853">
    <property type="term" value="F:isomerase activity"/>
    <property type="evidence" value="ECO:0007669"/>
    <property type="project" value="UniProtKB-KW"/>
</dbReference>
<dbReference type="GO" id="GO:0051082">
    <property type="term" value="F:unfolded protein binding"/>
    <property type="evidence" value="ECO:0007669"/>
    <property type="project" value="UniProtKB-UniRule"/>
</dbReference>
<dbReference type="GO" id="GO:0042026">
    <property type="term" value="P:protein refolding"/>
    <property type="evidence" value="ECO:0007669"/>
    <property type="project" value="UniProtKB-UniRule"/>
</dbReference>
<dbReference type="CDD" id="cd03344">
    <property type="entry name" value="GroEL"/>
    <property type="match status" value="1"/>
</dbReference>
<dbReference type="FunFam" id="1.10.560.10:FF:000001">
    <property type="entry name" value="60 kDa chaperonin"/>
    <property type="match status" value="1"/>
</dbReference>
<dbReference type="FunFam" id="3.50.7.10:FF:000001">
    <property type="entry name" value="60 kDa chaperonin"/>
    <property type="match status" value="1"/>
</dbReference>
<dbReference type="Gene3D" id="3.50.7.10">
    <property type="entry name" value="GroEL"/>
    <property type="match status" value="1"/>
</dbReference>
<dbReference type="Gene3D" id="1.10.560.10">
    <property type="entry name" value="GroEL-like equatorial domain"/>
    <property type="match status" value="1"/>
</dbReference>
<dbReference type="Gene3D" id="3.30.260.10">
    <property type="entry name" value="TCP-1-like chaperonin intermediate domain"/>
    <property type="match status" value="1"/>
</dbReference>
<dbReference type="HAMAP" id="MF_00600">
    <property type="entry name" value="CH60"/>
    <property type="match status" value="1"/>
</dbReference>
<dbReference type="InterPro" id="IPR018370">
    <property type="entry name" value="Chaperonin_Cpn60_CS"/>
</dbReference>
<dbReference type="InterPro" id="IPR001844">
    <property type="entry name" value="Cpn60/GroEL"/>
</dbReference>
<dbReference type="InterPro" id="IPR002423">
    <property type="entry name" value="Cpn60/GroEL/TCP-1"/>
</dbReference>
<dbReference type="InterPro" id="IPR027409">
    <property type="entry name" value="GroEL-like_apical_dom_sf"/>
</dbReference>
<dbReference type="InterPro" id="IPR027413">
    <property type="entry name" value="GROEL-like_equatorial_sf"/>
</dbReference>
<dbReference type="InterPro" id="IPR027410">
    <property type="entry name" value="TCP-1-like_intermed_sf"/>
</dbReference>
<dbReference type="NCBIfam" id="TIGR02348">
    <property type="entry name" value="GroEL"/>
    <property type="match status" value="1"/>
</dbReference>
<dbReference type="NCBIfam" id="NF000592">
    <property type="entry name" value="PRK00013.1"/>
    <property type="match status" value="1"/>
</dbReference>
<dbReference type="NCBIfam" id="NF009487">
    <property type="entry name" value="PRK12849.1"/>
    <property type="match status" value="1"/>
</dbReference>
<dbReference type="NCBIfam" id="NF009488">
    <property type="entry name" value="PRK12850.1"/>
    <property type="match status" value="1"/>
</dbReference>
<dbReference type="NCBIfam" id="NF009489">
    <property type="entry name" value="PRK12851.1"/>
    <property type="match status" value="1"/>
</dbReference>
<dbReference type="PANTHER" id="PTHR45633">
    <property type="entry name" value="60 KDA HEAT SHOCK PROTEIN, MITOCHONDRIAL"/>
    <property type="match status" value="1"/>
</dbReference>
<dbReference type="Pfam" id="PF00118">
    <property type="entry name" value="Cpn60_TCP1"/>
    <property type="match status" value="1"/>
</dbReference>
<dbReference type="PRINTS" id="PR00298">
    <property type="entry name" value="CHAPERONIN60"/>
</dbReference>
<dbReference type="SUPFAM" id="SSF52029">
    <property type="entry name" value="GroEL apical domain-like"/>
    <property type="match status" value="1"/>
</dbReference>
<dbReference type="SUPFAM" id="SSF48592">
    <property type="entry name" value="GroEL equatorial domain-like"/>
    <property type="match status" value="1"/>
</dbReference>
<dbReference type="SUPFAM" id="SSF54849">
    <property type="entry name" value="GroEL-intermediate domain like"/>
    <property type="match status" value="1"/>
</dbReference>
<dbReference type="PROSITE" id="PS00296">
    <property type="entry name" value="CHAPERONINS_CPN60"/>
    <property type="match status" value="1"/>
</dbReference>
<gene>
    <name evidence="1" type="primary">groEL</name>
    <name evidence="1" type="synonym">groL</name>
    <name type="ordered locus">M28_Spy1747</name>
</gene>
<evidence type="ECO:0000255" key="1">
    <source>
        <dbReference type="HAMAP-Rule" id="MF_00600"/>
    </source>
</evidence>
<protein>
    <recommendedName>
        <fullName evidence="1">Chaperonin GroEL</fullName>
        <ecNumber evidence="1">5.6.1.7</ecNumber>
    </recommendedName>
    <alternativeName>
        <fullName evidence="1">60 kDa chaperonin</fullName>
    </alternativeName>
    <alternativeName>
        <fullName evidence="1">Chaperonin-60</fullName>
        <shortName evidence="1">Cpn60</shortName>
    </alternativeName>
</protein>
<accession>Q48R03</accession>